<sequence length="1208" mass="138658">MDLHMMNCELLATCSALGYLEGDTYHKEPDCLESVKDLIRYLRHEDETRDVRQQLGAAQILQSDLLPILTQHHQDKPLFDAVIRLMVNLTQPALLCFGNLPKEPSFRHHFLQVLTYLQAYKEAFASEKAFGVLSETLYELLQLGWEERQEEDNLLIERILLLVRNILHVPADLDQEKKIDDDASAHDQLLWAIHLSGLDDLLLFLASSSAEEQWSLHVLEIVSLMFRDQNPEQLAGVGQGRLAQERSADFAELEVLRQREMAEKKTRALQRGNRHSRFGGSYIVQGLKSIGERDLIFHKGLHNLRNYSSDLGKQPKKVPKRRQAARELSIQRRSALNVRLFLRDFCSEFLENCYNRLMGSVKDHLLREKAQQHDETYYMWALAFFMAFNRAASFRPGLVSETLSVRTFHFIEQNLTNYYEMMLTDRKEAASWARRMHLALKAYQELLATVNEMDISPDEAVRESSRIIKNNIFYVMEYRELFLALFRKFDERCQPRSFLRDLVETTHLFLKMLERFCRSRGNLVVQNKQKKRRKKKKKVLDQAIVSGNVPSSPEEVEAVWPALAEQLQCCAQNSELSMDSVVPFDAASEVPVEEQRAEAMVRIQDCLLAGQAPQALTLLRSAREVWPEGDVFGSQDISPEEEIQLLKQILSAPLPRQQGPEERGAEEEEEEEEEEEEELQVVQVSEKEFNFLDYLKRFACSTVVRAYVLLLRSYQQNSAHTNHCIVKMLHRLAHDLKMEALLFQLSVFCLFNRLLSDPAAGAYKELVTFAKYILGKFFALAAVNQKAFVELLFWKNTAVVREMTEGYGSLDDRSSSRRAPTWSPEEEAHLRELYLANKDVEGQDVVEAILAHLNTVPRTRKQIIHHLVQMGLADSVKDFQRKGTHIVLWTGDQELELQRLFEEFRDSDDVLGHIMKNITAKRSRARIVDKLLALGLVAERRELYKKRQKKLASSILPNGAESLKDFCQEDLEEEENLPEEDSEEEEEGGSEAEQVQGSLVLSNENLGQSLHQEGFSIPLLWLQNCLIRAADDREEDGCSQAVPLVPLTEENEEAMENEQFQQLLRKLGVRPPASGQETFWRIPAKLSPTQLRRAAASLSQPEEEQKLQPELQPKVPGEQGSDEEHCKEHRAQALRALLLAHKKKAGLASPEEEDAVGKEPLKAAPKKRQLLDSDEEQEEDEGRNRAPELGAPGIQKKKRYQIEDDEDD</sequence>
<evidence type="ECO:0000250" key="1">
    <source>
        <dbReference type="UniProtKB" id="Q9R1X4"/>
    </source>
</evidence>
<evidence type="ECO:0000256" key="2">
    <source>
        <dbReference type="SAM" id="MobiDB-lite"/>
    </source>
</evidence>
<evidence type="ECO:0000269" key="3">
    <source>
    </source>
</evidence>
<evidence type="ECO:0000269" key="4">
    <source>
    </source>
</evidence>
<evidence type="ECO:0000269" key="5">
    <source>
    </source>
</evidence>
<evidence type="ECO:0000269" key="6">
    <source>
    </source>
</evidence>
<evidence type="ECO:0000269" key="7">
    <source>
    </source>
</evidence>
<evidence type="ECO:0000269" key="8">
    <source>
    </source>
</evidence>
<evidence type="ECO:0000269" key="9">
    <source>
    </source>
</evidence>
<evidence type="ECO:0000269" key="10">
    <source>
    </source>
</evidence>
<evidence type="ECO:0000269" key="11">
    <source>
    </source>
</evidence>
<evidence type="ECO:0000269" key="12">
    <source>
    </source>
</evidence>
<evidence type="ECO:0000269" key="13">
    <source>
    </source>
</evidence>
<evidence type="ECO:0000269" key="14">
    <source>
    </source>
</evidence>
<evidence type="ECO:0000269" key="15">
    <source>
    </source>
</evidence>
<evidence type="ECO:0000269" key="16">
    <source>
    </source>
</evidence>
<evidence type="ECO:0000269" key="17">
    <source>
    </source>
</evidence>
<evidence type="ECO:0000269" key="18">
    <source>
    </source>
</evidence>
<evidence type="ECO:0000269" key="19">
    <source>
    </source>
</evidence>
<evidence type="ECO:0000269" key="20">
    <source>
    </source>
</evidence>
<evidence type="ECO:0000269" key="21">
    <source>
    </source>
</evidence>
<evidence type="ECO:0000269" key="22">
    <source>
    </source>
</evidence>
<evidence type="ECO:0000269" key="23">
    <source>
    </source>
</evidence>
<evidence type="ECO:0000269" key="24">
    <source ref="3"/>
</evidence>
<evidence type="ECO:0000303" key="25">
    <source>
    </source>
</evidence>
<evidence type="ECO:0000303" key="26">
    <source>
    </source>
</evidence>
<evidence type="ECO:0000303" key="27">
    <source>
    </source>
</evidence>
<evidence type="ECO:0000305" key="28"/>
<evidence type="ECO:0000312" key="29">
    <source>
        <dbReference type="EMBL" id="AAH39842.1"/>
    </source>
</evidence>
<evidence type="ECO:0000312" key="30">
    <source>
        <dbReference type="EMBL" id="AAH50557.1"/>
    </source>
</evidence>
<evidence type="ECO:0000312" key="31">
    <source>
        <dbReference type="EMBL" id="BAA36499.1"/>
    </source>
</evidence>
<evidence type="ECO:0007744" key="32">
    <source>
        <dbReference type="PDB" id="4XHT"/>
    </source>
</evidence>
<evidence type="ECO:0007744" key="33">
    <source>
        <dbReference type="PDB" id="4XHU"/>
    </source>
</evidence>
<evidence type="ECO:0007744" key="34">
    <source>
        <dbReference type="PDB" id="4XHW"/>
    </source>
</evidence>
<evidence type="ECO:0007744" key="35">
    <source>
        <dbReference type="PDB" id="5MQI"/>
    </source>
</evidence>
<evidence type="ECO:0007744" key="36">
    <source>
        <dbReference type="PDB" id="6T9Q"/>
    </source>
</evidence>
<evidence type="ECO:0007744" key="37">
    <source>
        <dbReference type="PDB" id="6TAZ"/>
    </source>
</evidence>
<evidence type="ECO:0007744" key="38">
    <source>
        <dbReference type="PDB" id="7PFO"/>
    </source>
</evidence>
<evidence type="ECO:0007744" key="39">
    <source>
        <dbReference type="PDB" id="7PLO"/>
    </source>
</evidence>
<evidence type="ECO:0007744" key="40">
    <source>
    </source>
</evidence>
<evidence type="ECO:0007744" key="41">
    <source>
    </source>
</evidence>
<evidence type="ECO:0007744" key="42">
    <source>
    </source>
</evidence>
<evidence type="ECO:0007744" key="43">
    <source>
    </source>
</evidence>
<evidence type="ECO:0007744" key="44">
    <source>
    </source>
</evidence>
<evidence type="ECO:0007744" key="45">
    <source>
    </source>
</evidence>
<evidence type="ECO:0007829" key="46">
    <source>
        <dbReference type="PDB" id="4XHT"/>
    </source>
</evidence>
<evidence type="ECO:0007829" key="47">
    <source>
        <dbReference type="PDB" id="4XHW"/>
    </source>
</evidence>
<evidence type="ECO:0007829" key="48">
    <source>
        <dbReference type="PDB" id="5MQI"/>
    </source>
</evidence>
<evidence type="ECO:0007829" key="49">
    <source>
        <dbReference type="PDB" id="6T9Q"/>
    </source>
</evidence>
<evidence type="ECO:0007829" key="50">
    <source>
        <dbReference type="PDB" id="6TAZ"/>
    </source>
</evidence>
<keyword id="KW-0002">3D-structure</keyword>
<keyword id="KW-0025">Alternative splicing</keyword>
<keyword id="KW-0090">Biological rhythms</keyword>
<keyword id="KW-0131">Cell cycle</keyword>
<keyword id="KW-0132">Cell division</keyword>
<keyword id="KW-0158">Chromosome</keyword>
<keyword id="KW-0217">Developmental protein</keyword>
<keyword id="KW-0225">Disease variant</keyword>
<keyword id="KW-0227">DNA damage</keyword>
<keyword id="KW-0234">DNA repair</keyword>
<keyword id="KW-0498">Mitosis</keyword>
<keyword id="KW-0539">Nucleus</keyword>
<keyword id="KW-0597">Phosphoprotein</keyword>
<keyword id="KW-1267">Proteomics identification</keyword>
<keyword id="KW-1185">Reference proteome</keyword>
<keyword id="KW-0804">Transcription</keyword>
<keyword id="KW-0805">Transcription regulation</keyword>
<comment type="function">
    <text evidence="1 4 8 9 11 12 13 16 17 18 21 22">Plays an important role in the control of DNA replication, maintenance of replication fork stability, maintenance of genome stability throughout normal DNA replication, DNA repair and in the regulation of the circadian clock (PubMed:17141802, PubMed:17296725, PubMed:23359676, PubMed:23418588, PubMed:26344098, PubMed:31138685, PubMed:32705708, PubMed:35585232, PubMed:9856465). Required to stabilize replication forks during DNA replication by forming a complex with TIPIN: this complex regulates DNA replication processes under both normal and stress conditions, stabilizes replication forks and influences both CHEK1 phosphorylation and the intra-S phase checkpoint in response to genotoxic stress (PubMed:17141802, PubMed:17296725, PubMed:23359676, PubMed:35585232). During DNA replication, inhibits the CMG complex ATPase activity and activates DNA polymerases catalytic activities, coupling DNA unwinding and DNA synthesis (PubMed:23359676). TIMELESS promotes TIPIN nuclear localization (PubMed:17141802, PubMed:17296725). Plays a role in maintaining processive DNA replication past genomic guanine-rich DNA sequences that form G-quadruplex (G4) structures, possibly together with DDX1 (PubMed:32705708). Involved in cell survival after DNA damage or replication stress by promoting DNA repair (PubMed:17141802, PubMed:17296725, PubMed:26344098, PubMed:30356214). In response to double-strand breaks (DSBs), accumulates at DNA damage sites and promotes homologous recombination repair via its interaction with PARP1 (PubMed:26344098, PubMed:30356214, PubMed:31138685). May be specifically required for the ATR-CHEK1 pathway in the replication checkpoint induced by hydroxyurea or ultraviolet light (PubMed:15798197). Involved in the determination of period length and in the DNA damage-dependent phase advancing of the circadian clock (PubMed:23418588, PubMed:31138685). Negatively regulates CLOCK|NPAS2-ARTNL/BMAL1|ARTNL2/BMAL2-induced transactivation of PER1 possibly via translocation of PER1 into the nucleus (PubMed:31138685, PubMed:9856465). May play a role as destabilizer of the PER2-CRY2 complex (PubMed:31138685). May also play an important role in epithelial cell morphogenesis and formation of branching tubules (By similarity).</text>
</comment>
<comment type="subunit">
    <text evidence="1 4 6 7 8 9 10 11 13 14 15 16 17 18 19 20 21 22">Monomer (PubMed:28334766). Homodimer or homomultimer (By similarity). Component of the circadian core oscillator, which includes the CRY proteins, CLOCK or NPAS2, ARTNL/BMAL1 or ARTNL2/BMAL2, CSKN1D and/or CSNK1E, TIMELESS, and the PER proteins (PubMed:9856465). Interacts with PER2 (PubMed:31138685). The interaction with PER2 is direct and via its second PAS domain (By similarity). Interacts directly with PER1 and PER3 (By similarity). Interacts with CRY2, CHEK1, ATR and ATRIP (PubMed:15798197, PubMed:31138685). Interacts with CRY1 (By similarity) (PubMed:15798197). Interacts with CLSPN; the interaction is required for leading-strand replication (PubMed:17141802, PubMed:23359676, PubMed:34694004, PubMed:34700328, PubMed:35585232). Interacts (via N-terminus) with TIPIN (PubMed:17102137, PubMed:17116885, PubMed:17296725, PubMed:28334766, PubMed:34694004, PubMed:34700328). The TIMELESS-TIPIN heterodimer binds preferably to guanine-rich quadruplex-forming (G4) DNA structures (PubMed:32705708). Associates with the MCM2-7 complex (PubMed:23359676, PubMed:34694004, PubMed:34700328). Interacts with DNA polymerases alpha, delta and epsilon (PubMed:23359676). Interacts with DDX11; this interaction increases recruitment of both proteins onto chromatin in response to replication stress induction by hydroxyurea (PubMed:20124417, PubMed:26503245, PubMed:32705708). Interacts with PARP1; interaction is direct and independent of poly-ADP-ribose (PubMed:26344098, PubMed:30356214).</text>
</comment>
<comment type="interaction">
    <interactant intactId="EBI-2212315">
        <id>Q9UNS1</id>
    </interactant>
    <interactant intactId="EBI-974488">
        <id>O14757</id>
        <label>CHEK1</label>
    </interactant>
    <organismsDiffer>false</organismsDiffer>
    <experiments>2</experiments>
</comment>
<comment type="interaction">
    <interactant intactId="EBI-2212315">
        <id>Q9UNS1</id>
    </interactant>
    <interactant intactId="EBI-2515360">
        <id>Q9BVW5</id>
        <label>TIPIN</label>
    </interactant>
    <organismsDiffer>false</organismsDiffer>
    <experiments>4</experiments>
</comment>
<comment type="subcellular location">
    <subcellularLocation>
        <location evidence="8 17">Nucleus</location>
    </subcellularLocation>
    <subcellularLocation>
        <location evidence="13">Chromosome</location>
    </subcellularLocation>
    <text evidence="13">In response to double-strand breaks (DSBs), accumulates at DNA damage sites via its interaction with PARP1.</text>
</comment>
<comment type="alternative products">
    <event type="alternative splicing"/>
    <isoform>
        <id>Q9UNS1-1</id>
        <name evidence="22 23">1</name>
        <sequence type="displayed"/>
    </isoform>
    <isoform>
        <id>Q9UNS1-2</id>
        <name evidence="22">2</name>
        <sequence type="described" ref="VSP_051693"/>
    </isoform>
</comment>
<comment type="tissue specificity">
    <text evidence="22 23">Expressed in all tissues examined including brain, heart, lung, liver, skeletal muscle, kidney, placenta, pancreas, spleen, thymus and testis. Highest levels of expression in placenta, pancreas, thymus and testis.</text>
</comment>
<comment type="induction">
    <text evidence="4">Regulated by the cell cycle. High levels in S, G(2) and M phases, with highest level in S phase. Low expression in G(0) and G(1) phases.</text>
</comment>
<comment type="domain">
    <text evidence="17">Residues 1182-1199 comprise a putative nuclear localization signal; nuclear localization is required for the regulation of period length of the circadian clock.</text>
</comment>
<comment type="domain">
    <text evidence="18">The DNA-binding domain (residues 816-954) binds to both single-stranded DNA (ssDNA) and double-stranded DNA (dsDNA), and has high affinity for DNA sequences rich in guanine that form G-quadruplex (G4) structures.</text>
</comment>
<comment type="domain">
    <text evidence="18">The C-terminal domain, comprising the DNA-binding domain and the PARP1-binding region, is required for the replication past genomic guanine-rich DNA sequences that form G-quadruplex (G4) structures.</text>
</comment>
<comment type="disease" evidence="17">
    <disease id="DI-06481">
        <name>Advanced sleep phase syndrome, familial, 4</name>
        <acronym>FASPS4</acronym>
        <description>An autosomal dominant disorder characterized by very early sleep onset and offset. Individuals are 'morning larks' with a 4 hours advance of the sleep, temperature and melatonin rhythms.</description>
        <dbReference type="MIM" id="620015"/>
    </disease>
    <text>The disease is caused by variants affecting the gene represented in this entry.</text>
</comment>
<comment type="similarity">
    <text evidence="28">Belongs to the timeless family.</text>
</comment>
<comment type="sequence caution" evidence="28">
    <conflict type="miscellaneous discrepancy">
        <sequence resource="EMBL-CDS" id="AAH39842"/>
    </conflict>
    <text>Contaminating sequence. Potential poly-A sequence.</text>
</comment>
<proteinExistence type="evidence at protein level"/>
<protein>
    <recommendedName>
        <fullName>Protein timeless homolog</fullName>
        <shortName>hTIM</shortName>
    </recommendedName>
</protein>
<reference evidence="31" key="1">
    <citation type="journal article" date="1998" name="FEBS Lett.">
        <title>Identification of the mammalian homologues of the Drosophila timeless gene, Timeless1.</title>
        <authorList>
            <person name="Koike N."/>
            <person name="Hida A."/>
            <person name="Numano R."/>
            <person name="Hirose M."/>
            <person name="Sakaki Y."/>
            <person name="Tei H."/>
        </authorList>
    </citation>
    <scope>NUCLEOTIDE SEQUENCE [MRNA] (ISOFORM 1)</scope>
    <scope>TISSUE SPECIFICITY</scope>
    <scope>VARIANT LEU-455</scope>
    <source>
        <tissue evidence="31">Brain</tissue>
    </source>
</reference>
<reference key="2">
    <citation type="journal article" date="1998" name="Neuron">
        <title>Mammalian circadian autoregulatory loop: a timeless ortholog and mPer1 interact and negatively regulate CLOCK-ARTNL/BMAL1-induced transcription.</title>
        <authorList>
            <person name="Sangoram A.M."/>
            <person name="Saez L."/>
            <person name="Antoch M.P."/>
            <person name="Gekakis N."/>
            <person name="Staknis D."/>
            <person name="Whiteley A."/>
            <person name="Fruechte E.M."/>
            <person name="Vitaterna M.H."/>
            <person name="Shimomura K."/>
            <person name="King D.P."/>
            <person name="Young M.W."/>
            <person name="Weitz C.J."/>
            <person name="Takahashi J.S."/>
        </authorList>
    </citation>
    <scope>NUCLEOTIDE SEQUENCE [MRNA] (ISOFORMS 1 AND 2)</scope>
    <scope>FUNCTION</scope>
    <scope>TISSUE SPECIFICITY</scope>
    <scope>VARIANTS LEU-455 AND GLN-831</scope>
    <source>
        <tissue>Placenta</tissue>
    </source>
</reference>
<reference key="3">
    <citation type="submission" date="2008-04" db="EMBL/GenBank/DDBJ databases">
        <authorList>
            <consortium name="NIEHS SNPs program"/>
        </authorList>
    </citation>
    <scope>NUCLEOTIDE SEQUENCE [GENOMIC DNA]</scope>
    <scope>VARIANTS SER-129; LEU-455; SER-471; GLN-831; VAL-870; HIS-922; TRP-924; THR-1017 AND LEU-1018</scope>
</reference>
<reference key="4">
    <citation type="journal article" date="2006" name="Nature">
        <title>The finished DNA sequence of human chromosome 12.</title>
        <authorList>
            <person name="Scherer S.E."/>
            <person name="Muzny D.M."/>
            <person name="Buhay C.J."/>
            <person name="Chen R."/>
            <person name="Cree A."/>
            <person name="Ding Y."/>
            <person name="Dugan-Rocha S."/>
            <person name="Gill R."/>
            <person name="Gunaratne P."/>
            <person name="Harris R.A."/>
            <person name="Hawes A.C."/>
            <person name="Hernandez J."/>
            <person name="Hodgson A.V."/>
            <person name="Hume J."/>
            <person name="Jackson A."/>
            <person name="Khan Z.M."/>
            <person name="Kovar-Smith C."/>
            <person name="Lewis L.R."/>
            <person name="Lozado R.J."/>
            <person name="Metzker M.L."/>
            <person name="Milosavljevic A."/>
            <person name="Miner G.R."/>
            <person name="Montgomery K.T."/>
            <person name="Morgan M.B."/>
            <person name="Nazareth L.V."/>
            <person name="Scott G."/>
            <person name="Sodergren E."/>
            <person name="Song X.-Z."/>
            <person name="Steffen D."/>
            <person name="Lovering R.C."/>
            <person name="Wheeler D.A."/>
            <person name="Worley K.C."/>
            <person name="Yuan Y."/>
            <person name="Zhang Z."/>
            <person name="Adams C.Q."/>
            <person name="Ansari-Lari M.A."/>
            <person name="Ayele M."/>
            <person name="Brown M.J."/>
            <person name="Chen G."/>
            <person name="Chen Z."/>
            <person name="Clerc-Blankenburg K.P."/>
            <person name="Davis C."/>
            <person name="Delgado O."/>
            <person name="Dinh H.H."/>
            <person name="Draper H."/>
            <person name="Gonzalez-Garay M.L."/>
            <person name="Havlak P."/>
            <person name="Jackson L.R."/>
            <person name="Jacob L.S."/>
            <person name="Kelly S.H."/>
            <person name="Li L."/>
            <person name="Li Z."/>
            <person name="Liu J."/>
            <person name="Liu W."/>
            <person name="Lu J."/>
            <person name="Maheshwari M."/>
            <person name="Nguyen B.-V."/>
            <person name="Okwuonu G.O."/>
            <person name="Pasternak S."/>
            <person name="Perez L.M."/>
            <person name="Plopper F.J.H."/>
            <person name="Santibanez J."/>
            <person name="Shen H."/>
            <person name="Tabor P.E."/>
            <person name="Verduzco D."/>
            <person name="Waldron L."/>
            <person name="Wang Q."/>
            <person name="Williams G.A."/>
            <person name="Zhang J."/>
            <person name="Zhou J."/>
            <person name="Allen C.C."/>
            <person name="Amin A.G."/>
            <person name="Anyalebechi V."/>
            <person name="Bailey M."/>
            <person name="Barbaria J.A."/>
            <person name="Bimage K.E."/>
            <person name="Bryant N.P."/>
            <person name="Burch P.E."/>
            <person name="Burkett C.E."/>
            <person name="Burrell K.L."/>
            <person name="Calderon E."/>
            <person name="Cardenas V."/>
            <person name="Carter K."/>
            <person name="Casias K."/>
            <person name="Cavazos I."/>
            <person name="Cavazos S.R."/>
            <person name="Ceasar H."/>
            <person name="Chacko J."/>
            <person name="Chan S.N."/>
            <person name="Chavez D."/>
            <person name="Christopoulos C."/>
            <person name="Chu J."/>
            <person name="Cockrell R."/>
            <person name="Cox C.D."/>
            <person name="Dang M."/>
            <person name="Dathorne S.R."/>
            <person name="David R."/>
            <person name="Davis C.M."/>
            <person name="Davy-Carroll L."/>
            <person name="Deshazo D.R."/>
            <person name="Donlin J.E."/>
            <person name="D'Souza L."/>
            <person name="Eaves K.A."/>
            <person name="Egan A."/>
            <person name="Emery-Cohen A.J."/>
            <person name="Escotto M."/>
            <person name="Flagg N."/>
            <person name="Forbes L.D."/>
            <person name="Gabisi A.M."/>
            <person name="Garza M."/>
            <person name="Hamilton C."/>
            <person name="Henderson N."/>
            <person name="Hernandez O."/>
            <person name="Hines S."/>
            <person name="Hogues M.E."/>
            <person name="Huang M."/>
            <person name="Idlebird D.G."/>
            <person name="Johnson R."/>
            <person name="Jolivet A."/>
            <person name="Jones S."/>
            <person name="Kagan R."/>
            <person name="King L.M."/>
            <person name="Leal B."/>
            <person name="Lebow H."/>
            <person name="Lee S."/>
            <person name="LeVan J.M."/>
            <person name="Lewis L.C."/>
            <person name="London P."/>
            <person name="Lorensuhewa L.M."/>
            <person name="Loulseged H."/>
            <person name="Lovett D.A."/>
            <person name="Lucier A."/>
            <person name="Lucier R.L."/>
            <person name="Ma J."/>
            <person name="Madu R.C."/>
            <person name="Mapua P."/>
            <person name="Martindale A.D."/>
            <person name="Martinez E."/>
            <person name="Massey E."/>
            <person name="Mawhiney S."/>
            <person name="Meador M.G."/>
            <person name="Mendez S."/>
            <person name="Mercado C."/>
            <person name="Mercado I.C."/>
            <person name="Merritt C.E."/>
            <person name="Miner Z.L."/>
            <person name="Minja E."/>
            <person name="Mitchell T."/>
            <person name="Mohabbat F."/>
            <person name="Mohabbat K."/>
            <person name="Montgomery B."/>
            <person name="Moore N."/>
            <person name="Morris S."/>
            <person name="Munidasa M."/>
            <person name="Ngo R.N."/>
            <person name="Nguyen N.B."/>
            <person name="Nickerson E."/>
            <person name="Nwaokelemeh O.O."/>
            <person name="Nwokenkwo S."/>
            <person name="Obregon M."/>
            <person name="Oguh M."/>
            <person name="Oragunye N."/>
            <person name="Oviedo R.J."/>
            <person name="Parish B.J."/>
            <person name="Parker D.N."/>
            <person name="Parrish J."/>
            <person name="Parks K.L."/>
            <person name="Paul H.A."/>
            <person name="Payton B.A."/>
            <person name="Perez A."/>
            <person name="Perrin W."/>
            <person name="Pickens A."/>
            <person name="Primus E.L."/>
            <person name="Pu L.-L."/>
            <person name="Puazo M."/>
            <person name="Quiles M.M."/>
            <person name="Quiroz J.B."/>
            <person name="Rabata D."/>
            <person name="Reeves K."/>
            <person name="Ruiz S.J."/>
            <person name="Shao H."/>
            <person name="Sisson I."/>
            <person name="Sonaike T."/>
            <person name="Sorelle R.P."/>
            <person name="Sutton A.E."/>
            <person name="Svatek A.F."/>
            <person name="Svetz L.A."/>
            <person name="Tamerisa K.S."/>
            <person name="Taylor T.R."/>
            <person name="Teague B."/>
            <person name="Thomas N."/>
            <person name="Thorn R.D."/>
            <person name="Trejos Z.Y."/>
            <person name="Trevino B.K."/>
            <person name="Ukegbu O.N."/>
            <person name="Urban J.B."/>
            <person name="Vasquez L.I."/>
            <person name="Vera V.A."/>
            <person name="Villasana D.M."/>
            <person name="Wang L."/>
            <person name="Ward-Moore S."/>
            <person name="Warren J.T."/>
            <person name="Wei X."/>
            <person name="White F."/>
            <person name="Williamson A.L."/>
            <person name="Wleczyk R."/>
            <person name="Wooden H.S."/>
            <person name="Wooden S.H."/>
            <person name="Yen J."/>
            <person name="Yoon L."/>
            <person name="Yoon V."/>
            <person name="Zorrilla S.E."/>
            <person name="Nelson D."/>
            <person name="Kucherlapati R."/>
            <person name="Weinstock G."/>
            <person name="Gibbs R.A."/>
        </authorList>
    </citation>
    <scope>NUCLEOTIDE SEQUENCE [LARGE SCALE GENOMIC DNA]</scope>
</reference>
<reference key="5">
    <citation type="journal article" date="2004" name="Genome Res.">
        <title>The status, quality, and expansion of the NIH full-length cDNA project: the Mammalian Gene Collection (MGC).</title>
        <authorList>
            <consortium name="The MGC Project Team"/>
        </authorList>
    </citation>
    <scope>NUCLEOTIDE SEQUENCE [LARGE SCALE MRNA] (ISOFORMS 1 AND 2)</scope>
    <scope>VARIANTS GLN-831 AND LEU-1018</scope>
    <source>
        <tissue evidence="30">Duodenum</tissue>
        <tissue evidence="29">Skin</tissue>
    </source>
</reference>
<reference key="6">
    <citation type="journal article" date="2005" name="Mol. Cell. Biol.">
        <title>Coupling of human circadian and cell cycles by the timeless protein.</title>
        <authorList>
            <person name="Uensal-Kacmaz K."/>
            <person name="Mullen T.E."/>
            <person name="Kaufmann W.K."/>
            <person name="Sancar A."/>
        </authorList>
    </citation>
    <scope>FUNCTION</scope>
    <scope>INTERACTION WITH ATR; ATRIP; CHEK1 AND CRY2</scope>
    <scope>INDUCTION</scope>
</reference>
<reference key="7">
    <citation type="journal article" date="2006" name="Cell">
        <title>Global, in vivo, and site-specific phosphorylation dynamics in signaling networks.</title>
        <authorList>
            <person name="Olsen J.V."/>
            <person name="Blagoev B."/>
            <person name="Gnad F."/>
            <person name="Macek B."/>
            <person name="Kumar C."/>
            <person name="Mortensen P."/>
            <person name="Mann M."/>
        </authorList>
    </citation>
    <scope>PHOSPHORYLATION [LARGE SCALE ANALYSIS] AT SER-1173</scope>
    <scope>IDENTIFICATION BY MASS SPECTROMETRY [LARGE SCALE ANALYSIS]</scope>
    <source>
        <tissue>Cervix carcinoma</tissue>
    </source>
</reference>
<reference key="8">
    <citation type="journal article" date="2006" name="Nat. Biotechnol.">
        <title>A probability-based approach for high-throughput protein phosphorylation analysis and site localization.</title>
        <authorList>
            <person name="Beausoleil S.A."/>
            <person name="Villen J."/>
            <person name="Gerber S.A."/>
            <person name="Rush J."/>
            <person name="Gygi S.P."/>
        </authorList>
    </citation>
    <scope>PHOSPHORYLATION [LARGE SCALE ANALYSIS] AT SER-1173</scope>
    <scope>IDENTIFICATION BY MASS SPECTROMETRY [LARGE SCALE ANALYSIS]</scope>
    <source>
        <tissue>Cervix carcinoma</tissue>
    </source>
</reference>
<reference key="9">
    <citation type="journal article" date="2006" name="Proc. Natl. Acad. Sci. U.S.A.">
        <title>Tipin and Timeless form a mutually protective complex required for genotoxic stress resistance and checkpoint function.</title>
        <authorList>
            <person name="Chou D.M."/>
            <person name="Elledge S.J."/>
        </authorList>
    </citation>
    <scope>INTERACTION WITH TIPIN</scope>
</reference>
<reference key="10">
    <citation type="journal article" date="2007" name="J. Biol. Chem.">
        <title>Human Tim/Timeless-interacting protein, Tipin, is required for efficient progression of S phase and DNA replication checkpoint.</title>
        <authorList>
            <person name="Yoshizawa-Sugata N."/>
            <person name="Masai H."/>
        </authorList>
    </citation>
    <scope>INTERACTION WITH TIPIN</scope>
</reference>
<reference key="11">
    <citation type="journal article" date="2007" name="J. Mol. Biol.">
        <title>Mammalian TIMELESS and Tipin are evolutionarily conserved replication fork-associated factors.</title>
        <authorList>
            <person name="Gotter A.L."/>
            <person name="Suppa C."/>
            <person name="Emanuel B.S."/>
        </authorList>
    </citation>
    <scope>SUBCELLULAR LOCATION</scope>
    <scope>INTERACTION WITH CLSPN</scope>
    <scope>FUNCTION</scope>
</reference>
<reference key="12">
    <citation type="journal article" date="2007" name="Mol. Cell. Biol.">
        <title>The human Tim/Tipin complex coordinates an Intra-S checkpoint response to UV that slows replication fork displacement.</title>
        <authorList>
            <person name="Uensal-Kacmaz K."/>
            <person name="Chastain P.D."/>
            <person name="Qu P.-P."/>
            <person name="Minoo P."/>
            <person name="Cordeiro-Stone M."/>
            <person name="Sancar A."/>
            <person name="Kaufmann W.K."/>
        </authorList>
    </citation>
    <scope>INTERACTION WITH TIPIN</scope>
    <scope>FUNCTION</scope>
</reference>
<reference key="13">
    <citation type="journal article" date="2008" name="Proc. Natl. Acad. Sci. U.S.A.">
        <title>A quantitative atlas of mitotic phosphorylation.</title>
        <authorList>
            <person name="Dephoure N."/>
            <person name="Zhou C."/>
            <person name="Villen J."/>
            <person name="Beausoleil S.A."/>
            <person name="Bakalarski C.E."/>
            <person name="Elledge S.J."/>
            <person name="Gygi S.P."/>
        </authorList>
    </citation>
    <scope>IDENTIFICATION BY MASS SPECTROMETRY [LARGE SCALE ANALYSIS]</scope>
    <source>
        <tissue>Cervix carcinoma</tissue>
    </source>
</reference>
<reference key="14">
    <citation type="journal article" date="2009" name="Anal. Chem.">
        <title>Lys-N and trypsin cover complementary parts of the phosphoproteome in a refined SCX-based approach.</title>
        <authorList>
            <person name="Gauci S."/>
            <person name="Helbig A.O."/>
            <person name="Slijper M."/>
            <person name="Krijgsveld J."/>
            <person name="Heck A.J."/>
            <person name="Mohammed S."/>
        </authorList>
    </citation>
    <scope>IDENTIFICATION BY MASS SPECTROMETRY [LARGE SCALE ANALYSIS]</scope>
</reference>
<reference key="15">
    <citation type="journal article" date="2009" name="Sci. Signal.">
        <title>Quantitative phosphoproteomic analysis of T cell receptor signaling reveals system-wide modulation of protein-protein interactions.</title>
        <authorList>
            <person name="Mayya V."/>
            <person name="Lundgren D.H."/>
            <person name="Hwang S.-I."/>
            <person name="Rezaul K."/>
            <person name="Wu L."/>
            <person name="Eng J.K."/>
            <person name="Rodionov V."/>
            <person name="Han D.K."/>
        </authorList>
    </citation>
    <scope>PHOSPHORYLATION [LARGE SCALE ANALYSIS] AT SER-1149 AND SER-1173</scope>
    <scope>IDENTIFICATION BY MASS SPECTROMETRY [LARGE SCALE ANALYSIS]</scope>
    <source>
        <tissue>Leukemic T-cell</tissue>
    </source>
</reference>
<reference key="16">
    <citation type="journal article" date="2010" name="Cell Cycle">
        <title>The many facets of the Tim-Tipin protein families' roles in chromosome biology.</title>
        <authorList>
            <person name="McFarlane R.J."/>
            <person name="Mian S."/>
            <person name="Dalgaard J.Z."/>
        </authorList>
    </citation>
    <scope>REVIEW</scope>
</reference>
<reference key="17">
    <citation type="journal article" date="2010" name="J. Cell Sci.">
        <title>Human Timeless and Tipin stabilize replication forks and facilitate sister-chromatid cohesion.</title>
        <authorList>
            <person name="Leman A.R."/>
            <person name="Noguchi C."/>
            <person name="Lee C.Y."/>
            <person name="Noguchi E."/>
        </authorList>
    </citation>
    <scope>INTERACTION WITH DDX11</scope>
</reference>
<reference key="18">
    <citation type="journal article" date="2010" name="Sci. Signal.">
        <title>Quantitative phosphoproteomics reveals widespread full phosphorylation site occupancy during mitosis.</title>
        <authorList>
            <person name="Olsen J.V."/>
            <person name="Vermeulen M."/>
            <person name="Santamaria A."/>
            <person name="Kumar C."/>
            <person name="Miller M.L."/>
            <person name="Jensen L.J."/>
            <person name="Gnad F."/>
            <person name="Cox J."/>
            <person name="Jensen T.S."/>
            <person name="Nigg E.A."/>
            <person name="Brunak S."/>
            <person name="Mann M."/>
        </authorList>
    </citation>
    <scope>PHOSPHORYLATION [LARGE SCALE ANALYSIS] AT SER-1149 AND SER-1173</scope>
    <scope>IDENTIFICATION BY MASS SPECTROMETRY [LARGE SCALE ANALYSIS]</scope>
    <source>
        <tissue>Cervix carcinoma</tissue>
    </source>
</reference>
<reference key="19">
    <citation type="journal article" date="2011" name="BMC Syst. Biol.">
        <title>Initial characterization of the human central proteome.</title>
        <authorList>
            <person name="Burkard T.R."/>
            <person name="Planyavsky M."/>
            <person name="Kaupe I."/>
            <person name="Breitwieser F.P."/>
            <person name="Buerckstuemmer T."/>
            <person name="Bennett K.L."/>
            <person name="Superti-Furga G."/>
            <person name="Colinge J."/>
        </authorList>
    </citation>
    <scope>IDENTIFICATION BY MASS SPECTROMETRY [LARGE SCALE ANALYSIS]</scope>
</reference>
<reference key="20">
    <citation type="journal article" date="2011" name="Cell Cycle">
        <title>Timeless makes some time for itself.</title>
        <authorList>
            <person name="Diaz-Martinez L.A."/>
            <person name="Clarke D.J."/>
        </authorList>
    </citation>
    <scope>REVIEW</scope>
</reference>
<reference key="21">
    <citation type="journal article" date="2011" name="Sci. Signal.">
        <title>System-wide temporal characterization of the proteome and phosphoproteome of human embryonic stem cell differentiation.</title>
        <authorList>
            <person name="Rigbolt K.T."/>
            <person name="Prokhorova T.A."/>
            <person name="Akimov V."/>
            <person name="Henningsen J."/>
            <person name="Johansen P.T."/>
            <person name="Kratchmarova I."/>
            <person name="Kassem M."/>
            <person name="Mann M."/>
            <person name="Olsen J.V."/>
            <person name="Blagoev B."/>
        </authorList>
    </citation>
    <scope>PHOSPHORYLATION [LARGE SCALE ANALYSIS] AT SER-1149 AND SER-1173</scope>
    <scope>IDENTIFICATION BY MASS SPECTROMETRY [LARGE SCALE ANALYSIS]</scope>
</reference>
<reference key="22">
    <citation type="journal article" date="2013" name="J. Proteome Res.">
        <title>Toward a comprehensive characterization of a human cancer cell phosphoproteome.</title>
        <authorList>
            <person name="Zhou H."/>
            <person name="Di Palma S."/>
            <person name="Preisinger C."/>
            <person name="Peng M."/>
            <person name="Polat A.N."/>
            <person name="Heck A.J."/>
            <person name="Mohammed S."/>
        </authorList>
    </citation>
    <scope>PHOSPHORYLATION [LARGE SCALE ANALYSIS] AT SER-281; SER-1074; SER-1087; THR-1089; SER-1149 AND SER-1173</scope>
    <scope>IDENTIFICATION BY MASS SPECTROMETRY [LARGE SCALE ANALYSIS]</scope>
    <source>
        <tissue>Cervix carcinoma</tissue>
        <tissue>Erythroleukemia</tissue>
    </source>
</reference>
<reference key="23">
    <citation type="journal article" date="2013" name="PLoS ONE">
        <title>Mammalian TIMELESS is involved in period determination and DNA damage-dependent phase advancing of the circadian clock.</title>
        <authorList>
            <person name="Engelen E."/>
            <person name="Janssens R.C."/>
            <person name="Yagita K."/>
            <person name="Smits V.A."/>
            <person name="van der Horst G.T."/>
            <person name="Tamanini F."/>
        </authorList>
    </citation>
    <scope>FUNCTION</scope>
</reference>
<reference key="24">
    <citation type="journal article" date="2013" name="Proc. Natl. Acad. Sci. U.S.A.">
        <title>Human Tim-Tipin complex affects the biochemical properties of the replicative DNA helicase and DNA polymerases.</title>
        <authorList>
            <person name="Cho W.H."/>
            <person name="Kang Y.H."/>
            <person name="An Y.Y."/>
            <person name="Tappin I."/>
            <person name="Hurwitz J."/>
            <person name="Lee J.K."/>
        </authorList>
    </citation>
    <scope>FUNCTION</scope>
    <scope>INTERACTION WITH TIPIN; MCM COMPLEX AND DNA POLYMERASES</scope>
</reference>
<reference key="25">
    <citation type="journal article" date="2016" name="Nucleic Acids Res.">
        <title>Tim/Timeless, a member of the replication fork protection complex, operates with the Warsaw breakage syndrome DNA helicase DDX11 in the same fork recovery pathway.</title>
        <authorList>
            <person name="Cali F."/>
            <person name="Bharti S.K."/>
            <person name="Di Perna R."/>
            <person name="Brosh R.M. Jr."/>
            <person name="Pisani F.M."/>
        </authorList>
    </citation>
    <scope>INTERACTION WITH DDX11</scope>
</reference>
<reference key="26">
    <citation type="journal article" date="2018" name="Nature">
        <title>Nuclear cGAS suppresses DNA repair and promotes tumorigenesis.</title>
        <authorList>
            <person name="Liu H."/>
            <person name="Zhang H."/>
            <person name="Wu X."/>
            <person name="Ma D."/>
            <person name="Wu J."/>
            <person name="Wang L."/>
            <person name="Jiang Y."/>
            <person name="Fei Y."/>
            <person name="Zhu C."/>
            <person name="Tan R."/>
            <person name="Jungblut P."/>
            <person name="Pei G."/>
            <person name="Dorhoi A."/>
            <person name="Yan Q."/>
            <person name="Zhang F."/>
            <person name="Zheng R."/>
            <person name="Liu S."/>
            <person name="Liang H."/>
            <person name="Liu Z."/>
            <person name="Yang H."/>
            <person name="Chen J."/>
            <person name="Wang P."/>
            <person name="Tang T."/>
            <person name="Peng W."/>
            <person name="Hu Z."/>
            <person name="Xu Z."/>
            <person name="Huang X."/>
            <person name="Wang J."/>
            <person name="Li H."/>
            <person name="Zhou Y."/>
            <person name="Liu F."/>
            <person name="Yan D."/>
            <person name="Kaufmann S.H.E."/>
            <person name="Chen C."/>
            <person name="Mao Z."/>
            <person name="Ge B."/>
        </authorList>
    </citation>
    <scope>FUNCTION</scope>
    <scope>INTERACTION WITH PARP1</scope>
</reference>
<reference key="27">
    <citation type="journal article" date="2022" name="Nature">
        <title>Fast and efficient DNA replication with purified human proteins.</title>
        <authorList>
            <person name="Baris Y."/>
            <person name="Taylor M.R.G."/>
            <person name="Aria V."/>
            <person name="Yeeles J.T.P."/>
        </authorList>
    </citation>
    <scope>FUNCTION</scope>
</reference>
<reference key="28">
    <citation type="journal article" date="2019" name="Proc. Natl. Acad. Sci. U.S.A.">
        <title>TIMELESS mutation alters phase responsiveness and causes advanced sleep phase.</title>
        <authorList>
            <person name="Kurien P."/>
            <person name="Hsu P.K."/>
            <person name="Leon J."/>
            <person name="Wu D."/>
            <person name="McMahon T."/>
            <person name="Shi G."/>
            <person name="Xu Y."/>
            <person name="Lipzen A."/>
            <person name="Pennacchio L.A."/>
            <person name="Jones C.R."/>
            <person name="Fu Y.H."/>
            <person name="Ptacek L.J."/>
        </authorList>
    </citation>
    <scope>INVOLVEMENT IN FASPS4</scope>
    <scope>VARIANT FASPS4 1081-ARG--ASP-1208 DEL</scope>
    <scope>CHARACTERIZATION OF VARIANT FASPS4 1081-ARG--ASP-1208 DEL</scope>
    <scope>FUNCTION</scope>
    <scope>INTERACTION WITH CRY2 AND PER2</scope>
    <scope>SUBCELLULAR LOCATION</scope>
    <scope>DOMAIN</scope>
</reference>
<reference evidence="32 33 34" key="29">
    <citation type="journal article" date="2015" name="Mol. Cell">
        <title>Timeless interacts with PARP-1 to promote homologous recombination repair.</title>
        <authorList>
            <person name="Xie S."/>
            <person name="Mortusewicz O."/>
            <person name="Ma H.T."/>
            <person name="Herr P."/>
            <person name="Poon R.Y."/>
            <person name="Helleday T."/>
            <person name="Qian C."/>
        </authorList>
    </citation>
    <scope>X-RAY CRYSTALLOGRAPHY (1.65 ANGSTROMS) OF 1000-1098 IN COMPLEX WITH PARP1</scope>
    <scope>FUNCTION</scope>
    <scope>SUBCELLULAR LOCATION</scope>
    <scope>INTERACTION WITH PARP1</scope>
    <scope>MUTAGENESIS OF ARG-1081</scope>
</reference>
<reference evidence="35" key="30">
    <citation type="journal article" date="2017" name="Nucleic Acids Res.">
        <title>Crystal structure of the N-terminal domain of human Timeless and its interaction with Tipin.</title>
        <authorList>
            <person name="Holzer S."/>
            <person name="Degliesposti G."/>
            <person name="Kilkenny M.L."/>
            <person name="Maslen S.L."/>
            <person name="Matak-Vinkovic D."/>
            <person name="Skehel M."/>
            <person name="Pellegrini L."/>
        </authorList>
    </citation>
    <scope>X-RAY CRYSTALLOGRAPHY (1.85 ANGSTROMS) OF 1-238 AND 331-463</scope>
    <scope>SUBUNIT</scope>
    <scope>INTERACTION WITH TIPIN</scope>
</reference>
<reference evidence="36 37" key="31">
    <citation type="journal article" date="2020" name="EMBO J.">
        <title>Timeless couples G-quadruplex detection with processing by DDX11 helicase during DNA replication.</title>
        <authorList>
            <person name="Lerner L.K."/>
            <person name="Holzer S."/>
            <person name="Kilkenny M.L."/>
            <person name="Svikovic S."/>
            <person name="Murat P."/>
            <person name="Schiavone D."/>
            <person name="Eldridge C.B."/>
            <person name="Bittleston A."/>
            <person name="Maman J.D."/>
            <person name="Branzei D."/>
            <person name="Stott K."/>
            <person name="Pellegrini L."/>
            <person name="Sale J.E."/>
        </authorList>
    </citation>
    <scope>X-RAY CRYSTALLOGRAPHY (1.15 ANGSTROMS) OF 883-947</scope>
    <scope>STRUCTURE BY NMR OF 816-954</scope>
    <scope>FUNCTION</scope>
    <scope>INTERACTION WITH TIPIN AND DDX11</scope>
</reference>
<reference evidence="38" key="32">
    <citation type="journal article" date="2021" name="EMBO J.">
        <title>Structure of a human replisome shows the organisation and interactions of a DNA replication machine.</title>
        <authorList>
            <person name="Jones M.L."/>
            <person name="Baris Y."/>
            <person name="Taylor M.R.G."/>
            <person name="Yeeles J.T.P."/>
        </authorList>
    </citation>
    <scope>STRUCTURE BY ELECTRON MICROSCOPY (3.20 ANGSTROMS) IN REPLISOME</scope>
    <scope>SUBUNIT</scope>
    <scope>FUNCTION</scope>
</reference>
<reference evidence="39" key="33">
    <citation type="journal article" date="2021" name="Nature">
        <title>A conserved mechanism for regulating replisome disassembly in eukaryotes.</title>
        <authorList>
            <person name="Jenkyn-Bedford M."/>
            <person name="Jones M.L."/>
            <person name="Baris Y."/>
            <person name="Labib K.P.M."/>
            <person name="Cannone G."/>
            <person name="Yeeles J.T.P."/>
            <person name="Deegan T.D."/>
        </authorList>
    </citation>
    <scope>STRUCTURE BY ELECTRON MICROSCOPY (2.80 ANGSTROMS) IN REPLISOME</scope>
    <scope>SUBUNIT</scope>
</reference>
<reference key="34">
    <citation type="journal article" date="2006" name="Science">
        <title>The consensus coding sequences of human breast and colorectal cancers.</title>
        <authorList>
            <person name="Sjoeblom T."/>
            <person name="Jones S."/>
            <person name="Wood L.D."/>
            <person name="Parsons D.W."/>
            <person name="Lin J."/>
            <person name="Barber T.D."/>
            <person name="Mandelker D."/>
            <person name="Leary R.J."/>
            <person name="Ptak J."/>
            <person name="Silliman N."/>
            <person name="Szabo S."/>
            <person name="Buckhaults P."/>
            <person name="Farrell C."/>
            <person name="Meeh P."/>
            <person name="Markowitz S.D."/>
            <person name="Willis J."/>
            <person name="Dawson D."/>
            <person name="Willson J.K.V."/>
            <person name="Gazdar A.F."/>
            <person name="Hartigan J."/>
            <person name="Wu L."/>
            <person name="Liu C."/>
            <person name="Parmigiani G."/>
            <person name="Park B.H."/>
            <person name="Bachman K.E."/>
            <person name="Papadopoulos N."/>
            <person name="Vogelstein B."/>
            <person name="Kinzler K.W."/>
            <person name="Velculescu V.E."/>
        </authorList>
    </citation>
    <scope>VARIANTS [LARGE SCALE ANALYSIS] ASP-429 AND GLU-1008</scope>
</reference>
<gene>
    <name evidence="30" type="primary">TIMELESS</name>
    <name evidence="26" type="synonym">TIM</name>
    <name evidence="27" type="synonym">TIM1</name>
    <name evidence="27" type="synonym">TIMELESS1</name>
</gene>
<dbReference type="EMBL" id="AB015597">
    <property type="protein sequence ID" value="BAA36499.1"/>
    <property type="molecule type" value="mRNA"/>
</dbReference>
<dbReference type="EMBL" id="AF098162">
    <property type="protein sequence ID" value="AAC80011.1"/>
    <property type="molecule type" value="mRNA"/>
</dbReference>
<dbReference type="EMBL" id="EU627094">
    <property type="protein sequence ID" value="ACD11488.1"/>
    <property type="molecule type" value="Genomic_DNA"/>
</dbReference>
<dbReference type="EMBL" id="AC024884">
    <property type="status" value="NOT_ANNOTATED_CDS"/>
    <property type="molecule type" value="Genomic_DNA"/>
</dbReference>
<dbReference type="EMBL" id="BC039842">
    <property type="protein sequence ID" value="AAH39842.1"/>
    <property type="status" value="ALT_SEQ"/>
    <property type="molecule type" value="mRNA"/>
</dbReference>
<dbReference type="EMBL" id="BC050557">
    <property type="protein sequence ID" value="AAH50557.1"/>
    <property type="molecule type" value="mRNA"/>
</dbReference>
<dbReference type="CCDS" id="CCDS81699.1">
    <molecule id="Q9UNS1-2"/>
</dbReference>
<dbReference type="CCDS" id="CCDS8918.1">
    <molecule id="Q9UNS1-1"/>
</dbReference>
<dbReference type="RefSeq" id="NP_001317224.1">
    <molecule id="Q9UNS1-2"/>
    <property type="nucleotide sequence ID" value="NM_001330295.2"/>
</dbReference>
<dbReference type="RefSeq" id="NP_003911.2">
    <molecule id="Q9UNS1-1"/>
    <property type="nucleotide sequence ID" value="NM_003920.5"/>
</dbReference>
<dbReference type="PDB" id="4XHT">
    <property type="method" value="X-ray"/>
    <property type="resolution" value="1.65 A"/>
    <property type="chains" value="A/B/C/D=1000-1098"/>
</dbReference>
<dbReference type="PDB" id="4XHU">
    <property type="method" value="X-ray"/>
    <property type="resolution" value="2.09 A"/>
    <property type="chains" value="B/D=1000-1098"/>
</dbReference>
<dbReference type="PDB" id="4XHW">
    <property type="method" value="X-ray"/>
    <property type="resolution" value="2.85 A"/>
    <property type="chains" value="A/B/C/D=1000-1098"/>
</dbReference>
<dbReference type="PDB" id="5MQI">
    <property type="method" value="X-ray"/>
    <property type="resolution" value="1.85 A"/>
    <property type="chains" value="A=1-238, A=331-463"/>
</dbReference>
<dbReference type="PDB" id="6T9Q">
    <property type="method" value="X-ray"/>
    <property type="resolution" value="1.15 A"/>
    <property type="chains" value="A=883-947"/>
</dbReference>
<dbReference type="PDB" id="6TAZ">
    <property type="method" value="NMR"/>
    <property type="chains" value="B=816-954"/>
</dbReference>
<dbReference type="PDB" id="7PFO">
    <property type="method" value="EM"/>
    <property type="resolution" value="3.20 A"/>
    <property type="chains" value="K=1-1208"/>
</dbReference>
<dbReference type="PDB" id="7PLO">
    <property type="method" value="EM"/>
    <property type="resolution" value="2.80 A"/>
    <property type="chains" value="K=1-1208"/>
</dbReference>
<dbReference type="PDB" id="8B9D">
    <property type="method" value="EM"/>
    <property type="resolution" value="3.40 A"/>
    <property type="chains" value="K=1-1208"/>
</dbReference>
<dbReference type="PDBsum" id="4XHT"/>
<dbReference type="PDBsum" id="4XHU"/>
<dbReference type="PDBsum" id="4XHW"/>
<dbReference type="PDBsum" id="5MQI"/>
<dbReference type="PDBsum" id="6T9Q"/>
<dbReference type="PDBsum" id="6TAZ"/>
<dbReference type="PDBsum" id="7PFO"/>
<dbReference type="PDBsum" id="7PLO"/>
<dbReference type="PDBsum" id="8B9D"/>
<dbReference type="EMDB" id="EMD-13375"/>
<dbReference type="EMDB" id="EMD-13494"/>
<dbReference type="SMR" id="Q9UNS1"/>
<dbReference type="BioGRID" id="114428">
    <property type="interactions" value="137"/>
</dbReference>
<dbReference type="ComplexPortal" id="CPX-2526">
    <property type="entry name" value="Replication fork protection complex"/>
</dbReference>
<dbReference type="CORUM" id="Q9UNS1"/>
<dbReference type="DIP" id="DIP-47395N"/>
<dbReference type="FunCoup" id="Q9UNS1">
    <property type="interactions" value="2100"/>
</dbReference>
<dbReference type="IntAct" id="Q9UNS1">
    <property type="interactions" value="48"/>
</dbReference>
<dbReference type="MINT" id="Q9UNS1"/>
<dbReference type="STRING" id="9606.ENSP00000450607"/>
<dbReference type="GlyGen" id="Q9UNS1">
    <property type="glycosylation" value="1 site, 1 N-linked glycan (1 site)"/>
</dbReference>
<dbReference type="iPTMnet" id="Q9UNS1"/>
<dbReference type="PhosphoSitePlus" id="Q9UNS1"/>
<dbReference type="BioMuta" id="TIMELESS"/>
<dbReference type="DMDM" id="296452931"/>
<dbReference type="jPOST" id="Q9UNS1"/>
<dbReference type="MassIVE" id="Q9UNS1"/>
<dbReference type="PaxDb" id="9606-ENSP00000450607"/>
<dbReference type="PeptideAtlas" id="Q9UNS1"/>
<dbReference type="ProteomicsDB" id="85326">
    <molecule id="Q9UNS1-1"/>
</dbReference>
<dbReference type="ProteomicsDB" id="85327">
    <molecule id="Q9UNS1-2"/>
</dbReference>
<dbReference type="Pumba" id="Q9UNS1"/>
<dbReference type="Antibodypedia" id="15850">
    <property type="antibodies" value="220 antibodies from 32 providers"/>
</dbReference>
<dbReference type="DNASU" id="8914"/>
<dbReference type="Ensembl" id="ENST00000229201.4">
    <molecule id="Q9UNS1-2"/>
    <property type="protein sequence ID" value="ENSP00000229201.4"/>
    <property type="gene ID" value="ENSG00000111602.12"/>
</dbReference>
<dbReference type="Ensembl" id="ENST00000553532.6">
    <molecule id="Q9UNS1-1"/>
    <property type="protein sequence ID" value="ENSP00000450607.1"/>
    <property type="gene ID" value="ENSG00000111602.12"/>
</dbReference>
<dbReference type="GeneID" id="8914"/>
<dbReference type="KEGG" id="hsa:8914"/>
<dbReference type="MANE-Select" id="ENST00000553532.6">
    <property type="protein sequence ID" value="ENSP00000450607.1"/>
    <property type="RefSeq nucleotide sequence ID" value="NM_003920.5"/>
    <property type="RefSeq protein sequence ID" value="NP_003911.2"/>
</dbReference>
<dbReference type="UCSC" id="uc001slf.3">
    <molecule id="Q9UNS1-1"/>
    <property type="organism name" value="human"/>
</dbReference>
<dbReference type="AGR" id="HGNC:11813"/>
<dbReference type="CTD" id="8914"/>
<dbReference type="DisGeNET" id="8914"/>
<dbReference type="GeneCards" id="TIMELESS"/>
<dbReference type="HGNC" id="HGNC:11813">
    <property type="gene designation" value="TIMELESS"/>
</dbReference>
<dbReference type="HPA" id="ENSG00000111602">
    <property type="expression patterns" value="Low tissue specificity"/>
</dbReference>
<dbReference type="MalaCards" id="TIMELESS"/>
<dbReference type="MIM" id="603887">
    <property type="type" value="gene"/>
</dbReference>
<dbReference type="MIM" id="620015">
    <property type="type" value="phenotype"/>
</dbReference>
<dbReference type="neXtProt" id="NX_Q9UNS1"/>
<dbReference type="OpenTargets" id="ENSG00000111602"/>
<dbReference type="PharmGKB" id="PA36520"/>
<dbReference type="VEuPathDB" id="HostDB:ENSG00000111602"/>
<dbReference type="eggNOG" id="KOG1974">
    <property type="taxonomic scope" value="Eukaryota"/>
</dbReference>
<dbReference type="GeneTree" id="ENSGT00390000015124"/>
<dbReference type="HOGENOM" id="CLU_003493_0_0_1"/>
<dbReference type="InParanoid" id="Q9UNS1"/>
<dbReference type="OMA" id="LTRNVAM"/>
<dbReference type="OrthoDB" id="310853at2759"/>
<dbReference type="PAN-GO" id="Q9UNS1">
    <property type="GO annotations" value="6 GO annotations based on evolutionary models"/>
</dbReference>
<dbReference type="PhylomeDB" id="Q9UNS1"/>
<dbReference type="TreeFam" id="TF312802"/>
<dbReference type="PathwayCommons" id="Q9UNS1"/>
<dbReference type="Reactome" id="R-HSA-5693607">
    <property type="pathway name" value="Processing of DNA double-strand break ends"/>
</dbReference>
<dbReference type="SignaLink" id="Q9UNS1"/>
<dbReference type="SIGNOR" id="Q9UNS1"/>
<dbReference type="BioGRID-ORCS" id="8914">
    <property type="hits" value="760 hits in 1140 CRISPR screens"/>
</dbReference>
<dbReference type="ChiTaRS" id="TIMELESS">
    <property type="organism name" value="human"/>
</dbReference>
<dbReference type="EvolutionaryTrace" id="Q9UNS1"/>
<dbReference type="GenomeRNAi" id="8914"/>
<dbReference type="Pharos" id="Q9UNS1">
    <property type="development level" value="Tbio"/>
</dbReference>
<dbReference type="PRO" id="PR:Q9UNS1"/>
<dbReference type="Proteomes" id="UP000005640">
    <property type="component" value="Chromosome 12"/>
</dbReference>
<dbReference type="RNAct" id="Q9UNS1">
    <property type="molecule type" value="protein"/>
</dbReference>
<dbReference type="Bgee" id="ENSG00000111602">
    <property type="expression patterns" value="Expressed in ventricular zone and 136 other cell types or tissues"/>
</dbReference>
<dbReference type="GO" id="GO:0000785">
    <property type="term" value="C:chromatin"/>
    <property type="evidence" value="ECO:0000314"/>
    <property type="project" value="HGNC-UCL"/>
</dbReference>
<dbReference type="GO" id="GO:0005654">
    <property type="term" value="C:nucleoplasm"/>
    <property type="evidence" value="ECO:0000314"/>
    <property type="project" value="HPA"/>
</dbReference>
<dbReference type="GO" id="GO:0005634">
    <property type="term" value="C:nucleus"/>
    <property type="evidence" value="ECO:0000314"/>
    <property type="project" value="HGNC-UCL"/>
</dbReference>
<dbReference type="GO" id="GO:0031298">
    <property type="term" value="C:replication fork protection complex"/>
    <property type="evidence" value="ECO:0000318"/>
    <property type="project" value="GO_Central"/>
</dbReference>
<dbReference type="GO" id="GO:0035861">
    <property type="term" value="C:site of double-strand break"/>
    <property type="evidence" value="ECO:0000314"/>
    <property type="project" value="UniProtKB"/>
</dbReference>
<dbReference type="GO" id="GO:0003677">
    <property type="term" value="F:DNA binding"/>
    <property type="evidence" value="ECO:0000318"/>
    <property type="project" value="GO_Central"/>
</dbReference>
<dbReference type="GO" id="GO:0008047">
    <property type="term" value="F:enzyme activator activity"/>
    <property type="evidence" value="ECO:0000314"/>
    <property type="project" value="UniProtKB"/>
</dbReference>
<dbReference type="GO" id="GO:0042802">
    <property type="term" value="F:identical protein binding"/>
    <property type="evidence" value="ECO:0007669"/>
    <property type="project" value="Ensembl"/>
</dbReference>
<dbReference type="GO" id="GO:0048754">
    <property type="term" value="P:branching morphogenesis of an epithelial tube"/>
    <property type="evidence" value="ECO:0007669"/>
    <property type="project" value="Ensembl"/>
</dbReference>
<dbReference type="GO" id="GO:0044770">
    <property type="term" value="P:cell cycle phase transition"/>
    <property type="evidence" value="ECO:0000315"/>
    <property type="project" value="BHF-UCL"/>
</dbReference>
<dbReference type="GO" id="GO:0051301">
    <property type="term" value="P:cell division"/>
    <property type="evidence" value="ECO:0007669"/>
    <property type="project" value="UniProtKB-KW"/>
</dbReference>
<dbReference type="GO" id="GO:1904976">
    <property type="term" value="P:cellular response to bleomycin"/>
    <property type="evidence" value="ECO:0000315"/>
    <property type="project" value="UniProtKB"/>
</dbReference>
<dbReference type="GO" id="GO:0072719">
    <property type="term" value="P:cellular response to cisplatin"/>
    <property type="evidence" value="ECO:0000315"/>
    <property type="project" value="UniProtKB"/>
</dbReference>
<dbReference type="GO" id="GO:0072711">
    <property type="term" value="P:cellular response to hydroxyurea"/>
    <property type="evidence" value="ECO:0000315"/>
    <property type="project" value="UniProtKB"/>
</dbReference>
<dbReference type="GO" id="GO:0007623">
    <property type="term" value="P:circadian rhythm"/>
    <property type="evidence" value="ECO:0000250"/>
    <property type="project" value="UniProtKB"/>
</dbReference>
<dbReference type="GO" id="GO:0009582">
    <property type="term" value="P:detection of abiotic stimulus"/>
    <property type="evidence" value="ECO:0000304"/>
    <property type="project" value="ProtInc"/>
</dbReference>
<dbReference type="GO" id="GO:0006974">
    <property type="term" value="P:DNA damage response"/>
    <property type="evidence" value="ECO:0000315"/>
    <property type="project" value="UniProtKB"/>
</dbReference>
<dbReference type="GO" id="GO:0006281">
    <property type="term" value="P:DNA repair"/>
    <property type="evidence" value="ECO:0000318"/>
    <property type="project" value="GO_Central"/>
</dbReference>
<dbReference type="GO" id="GO:0000076">
    <property type="term" value="P:DNA replication checkpoint signaling"/>
    <property type="evidence" value="ECO:0000318"/>
    <property type="project" value="GO_Central"/>
</dbReference>
<dbReference type="GO" id="GO:0030324">
    <property type="term" value="P:lung development"/>
    <property type="evidence" value="ECO:0007669"/>
    <property type="project" value="Ensembl"/>
</dbReference>
<dbReference type="GO" id="GO:0002009">
    <property type="term" value="P:morphogenesis of an epithelium"/>
    <property type="evidence" value="ECO:0000250"/>
    <property type="project" value="UniProtKB"/>
</dbReference>
<dbReference type="GO" id="GO:0045892">
    <property type="term" value="P:negative regulation of DNA-templated transcription"/>
    <property type="evidence" value="ECO:0000314"/>
    <property type="project" value="UniProtKB"/>
</dbReference>
<dbReference type="GO" id="GO:2000781">
    <property type="term" value="P:positive regulation of double-strand break repair"/>
    <property type="evidence" value="ECO:0000315"/>
    <property type="project" value="UniProtKB"/>
</dbReference>
<dbReference type="GO" id="GO:1905168">
    <property type="term" value="P:positive regulation of double-strand break repair via homologous recombination"/>
    <property type="evidence" value="ECO:0000314"/>
    <property type="project" value="UniProtKB"/>
</dbReference>
<dbReference type="GO" id="GO:0042752">
    <property type="term" value="P:regulation of circadian rhythm"/>
    <property type="evidence" value="ECO:0000315"/>
    <property type="project" value="UniProtKB"/>
</dbReference>
<dbReference type="GO" id="GO:0043111">
    <property type="term" value="P:replication fork arrest"/>
    <property type="evidence" value="ECO:0000318"/>
    <property type="project" value="GO_Central"/>
</dbReference>
<dbReference type="GO" id="GO:0031297">
    <property type="term" value="P:replication fork processing"/>
    <property type="evidence" value="ECO:0000315"/>
    <property type="project" value="UniProtKB"/>
</dbReference>
<dbReference type="InterPro" id="IPR044998">
    <property type="entry name" value="Timeless"/>
</dbReference>
<dbReference type="InterPro" id="IPR007725">
    <property type="entry name" value="TIMELESS_C"/>
</dbReference>
<dbReference type="InterPro" id="IPR006906">
    <property type="entry name" value="Timeless_N"/>
</dbReference>
<dbReference type="PANTHER" id="PTHR22940:SF4">
    <property type="entry name" value="PROTEIN TIMELESS HOMOLOG"/>
    <property type="match status" value="1"/>
</dbReference>
<dbReference type="PANTHER" id="PTHR22940">
    <property type="entry name" value="TIMEOUT/TIMELESS-2"/>
    <property type="match status" value="1"/>
</dbReference>
<dbReference type="Pfam" id="PF04821">
    <property type="entry name" value="TIMELESS"/>
    <property type="match status" value="1"/>
</dbReference>
<dbReference type="Pfam" id="PF05029">
    <property type="entry name" value="TIMELESS_C"/>
    <property type="match status" value="1"/>
</dbReference>
<organism>
    <name type="scientific">Homo sapiens</name>
    <name type="common">Human</name>
    <dbReference type="NCBI Taxonomy" id="9606"/>
    <lineage>
        <taxon>Eukaryota</taxon>
        <taxon>Metazoa</taxon>
        <taxon>Chordata</taxon>
        <taxon>Craniata</taxon>
        <taxon>Vertebrata</taxon>
        <taxon>Euteleostomi</taxon>
        <taxon>Mammalia</taxon>
        <taxon>Eutheria</taxon>
        <taxon>Euarchontoglires</taxon>
        <taxon>Primates</taxon>
        <taxon>Haplorrhini</taxon>
        <taxon>Catarrhini</taxon>
        <taxon>Hominidae</taxon>
        <taxon>Homo</taxon>
    </lineage>
</organism>
<accession>Q9UNS1</accession>
<accession>B2ZAV0</accession>
<accession>O94802</accession>
<accession>Q86VM1</accession>
<accession>Q8IWH3</accession>
<name>TIM_HUMAN</name>
<feature type="chain" id="PRO_0000072538" description="Protein timeless homolog">
    <location>
        <begin position="1"/>
        <end position="1208"/>
    </location>
</feature>
<feature type="region of interest" description="Required for homodimerization and for interaction with CRY1 and CHEK1" evidence="1">
    <location>
        <begin position="1"/>
        <end position="309"/>
    </location>
</feature>
<feature type="region of interest" description="Disordered" evidence="2">
    <location>
        <begin position="655"/>
        <end position="679"/>
    </location>
</feature>
<feature type="region of interest" description="DNA-binding domain" evidence="18">
    <location>
        <begin position="816"/>
        <end position="954"/>
    </location>
</feature>
<feature type="region of interest" description="Disordered" evidence="2">
    <location>
        <begin position="971"/>
        <end position="994"/>
    </location>
</feature>
<feature type="region of interest" description="Interaction with PARP1" evidence="13">
    <location>
        <begin position="1000"/>
        <end position="1098"/>
    </location>
</feature>
<feature type="region of interest" description="Disordered" evidence="2">
    <location>
        <begin position="1091"/>
        <end position="1131"/>
    </location>
</feature>
<feature type="region of interest" description="Disordered" evidence="2">
    <location>
        <begin position="1143"/>
        <end position="1208"/>
    </location>
</feature>
<feature type="region of interest" description="Required for nuclear localization" evidence="17">
    <location>
        <begin position="1182"/>
        <end position="1199"/>
    </location>
</feature>
<feature type="compositionally biased region" description="Acidic residues" evidence="2">
    <location>
        <begin position="664"/>
        <end position="679"/>
    </location>
</feature>
<feature type="compositionally biased region" description="Acidic residues" evidence="2">
    <location>
        <begin position="971"/>
        <end position="990"/>
    </location>
</feature>
<feature type="compositionally biased region" description="Basic and acidic residues" evidence="2">
    <location>
        <begin position="1122"/>
        <end position="1131"/>
    </location>
</feature>
<feature type="compositionally biased region" description="Acidic residues" evidence="2">
    <location>
        <begin position="1172"/>
        <end position="1181"/>
    </location>
</feature>
<feature type="modified residue" description="Phosphoserine" evidence="45">
    <location>
        <position position="281"/>
    </location>
</feature>
<feature type="modified residue" description="Phosphoserine" evidence="45">
    <location>
        <position position="1074"/>
    </location>
</feature>
<feature type="modified residue" description="Phosphoserine" evidence="45">
    <location>
        <position position="1087"/>
    </location>
</feature>
<feature type="modified residue" description="Phosphothreonine" evidence="45">
    <location>
        <position position="1089"/>
    </location>
</feature>
<feature type="modified residue" description="Phosphoserine" evidence="42 43 44 45">
    <location>
        <position position="1149"/>
    </location>
</feature>
<feature type="modified residue" description="Phosphoserine" evidence="40 41 42 43 44 45">
    <location>
        <position position="1173"/>
    </location>
</feature>
<feature type="splice variant" id="VSP_051693" description="In isoform 2." evidence="25 26">
    <location>
        <position position="177"/>
    </location>
</feature>
<feature type="sequence variant" id="VAR_047879" description="In dbSNP:rs72478986." evidence="24">
    <original>A</original>
    <variation>S</variation>
    <location>
        <position position="129"/>
    </location>
</feature>
<feature type="sequence variant" id="VAR_036435" description="In a breast cancer sample; somatic mutation." evidence="5">
    <original>A</original>
    <variation>D</variation>
    <location>
        <position position="429"/>
    </location>
</feature>
<feature type="sequence variant" id="VAR_021483" description="In dbSNP:rs774027." evidence="22 23 24">
    <original>I</original>
    <variation>L</variation>
    <location>
        <position position="455"/>
    </location>
</feature>
<feature type="sequence variant" id="VAR_047880" description="In dbSNP:rs72478993." evidence="24">
    <original>N</original>
    <variation>S</variation>
    <location>
        <position position="471"/>
    </location>
</feature>
<feature type="sequence variant" id="VAR_021484" description="In dbSNP:rs774047." evidence="3 22 24">
    <original>R</original>
    <variation>Q</variation>
    <location>
        <position position="831"/>
    </location>
</feature>
<feature type="sequence variant" id="VAR_047881" description="In dbSNP:rs61733875." evidence="24">
    <original>M</original>
    <variation>V</variation>
    <location>
        <position position="870"/>
    </location>
</feature>
<feature type="sequence variant" id="VAR_047882" description="In dbSNP:rs72478999." evidence="24">
    <original>R</original>
    <variation>H</variation>
    <location>
        <position position="922"/>
    </location>
</feature>
<feature type="sequence variant" id="VAR_047883" description="In dbSNP:rs72479000." evidence="24">
    <original>R</original>
    <variation>W</variation>
    <location>
        <position position="924"/>
    </location>
</feature>
<feature type="sequence variant" id="VAR_036436" description="In a breast cancer sample; somatic mutation; dbSNP:rs151188513." evidence="5">
    <original>Q</original>
    <variation>E</variation>
    <location>
        <position position="1008"/>
    </location>
</feature>
<feature type="sequence variant" id="VAR_047884" description="In dbSNP:rs61376834." evidence="24">
    <original>I</original>
    <variation>T</variation>
    <location>
        <position position="1017"/>
    </location>
</feature>
<feature type="sequence variant" id="VAR_021485" description="In dbSNP:rs2291739." evidence="3 24">
    <original>P</original>
    <variation>L</variation>
    <location>
        <position position="1018"/>
    </location>
</feature>
<feature type="sequence variant" id="VAR_087625" description="In FASPS4; reduced protein stability; mislocalization in cytoplasm; reduced interaction with CRY2; enhanced destabilization of the PER2-CRY2 complex; reduced repressor activity of CLOCK|NPAS2-ARTNL/BMAL1|ARTNL2/BMAL2-induced transactivation of PER1; does not affect interaction with PER2; dbSNP:rs1465092391." evidence="17">
    <location>
        <begin position="1081"/>
        <end position="1208"/>
    </location>
</feature>
<feature type="mutagenesis site" description="Abolishes interaction with PARP1." evidence="13">
    <original>R</original>
    <variation>G</variation>
    <location>
        <position position="1081"/>
    </location>
</feature>
<feature type="helix" evidence="48">
    <location>
        <begin position="8"/>
        <end position="15"/>
    </location>
</feature>
<feature type="strand" evidence="48">
    <location>
        <begin position="17"/>
        <end position="21"/>
    </location>
</feature>
<feature type="strand" evidence="48">
    <location>
        <begin position="24"/>
        <end position="27"/>
    </location>
</feature>
<feature type="helix" evidence="48">
    <location>
        <begin position="31"/>
        <end position="43"/>
    </location>
</feature>
<feature type="helix" evidence="48">
    <location>
        <begin position="50"/>
        <end position="58"/>
    </location>
</feature>
<feature type="helix" evidence="48">
    <location>
        <begin position="60"/>
        <end position="63"/>
    </location>
</feature>
<feature type="helix" evidence="48">
    <location>
        <begin position="65"/>
        <end position="71"/>
    </location>
</feature>
<feature type="helix" evidence="48">
    <location>
        <begin position="76"/>
        <end position="89"/>
    </location>
</feature>
<feature type="helix" evidence="48">
    <location>
        <begin position="93"/>
        <end position="97"/>
    </location>
</feature>
<feature type="helix" evidence="48">
    <location>
        <begin position="106"/>
        <end position="123"/>
    </location>
</feature>
<feature type="helix" evidence="48">
    <location>
        <begin position="127"/>
        <end position="142"/>
    </location>
</feature>
<feature type="helix" evidence="48">
    <location>
        <begin position="145"/>
        <end position="147"/>
    </location>
</feature>
<feature type="helix" evidence="48">
    <location>
        <begin position="150"/>
        <end position="168"/>
    </location>
</feature>
<feature type="helix" evidence="48">
    <location>
        <begin position="184"/>
        <end position="195"/>
    </location>
</feature>
<feature type="helix" evidence="48">
    <location>
        <begin position="198"/>
        <end position="207"/>
    </location>
</feature>
<feature type="helix" evidence="48">
    <location>
        <begin position="209"/>
        <end position="214"/>
    </location>
</feature>
<feature type="helix" evidence="48">
    <location>
        <begin position="215"/>
        <end position="225"/>
    </location>
</feature>
<feature type="turn" evidence="48">
    <location>
        <begin position="226"/>
        <end position="228"/>
    </location>
</feature>
<feature type="helix" evidence="48">
    <location>
        <begin position="231"/>
        <end position="234"/>
    </location>
</feature>
<feature type="helix" evidence="48">
    <location>
        <begin position="336"/>
        <end position="352"/>
    </location>
</feature>
<feature type="helix" evidence="48">
    <location>
        <begin position="354"/>
        <end position="367"/>
    </location>
</feature>
<feature type="helix" evidence="48">
    <location>
        <begin position="369"/>
        <end position="371"/>
    </location>
</feature>
<feature type="helix" evidence="48">
    <location>
        <begin position="376"/>
        <end position="391"/>
    </location>
</feature>
<feature type="helix" evidence="48">
    <location>
        <begin position="396"/>
        <end position="402"/>
    </location>
</feature>
<feature type="helix" evidence="48">
    <location>
        <begin position="405"/>
        <end position="424"/>
    </location>
</feature>
<feature type="helix" evidence="48">
    <location>
        <begin position="426"/>
        <end position="428"/>
    </location>
</feature>
<feature type="helix" evidence="48">
    <location>
        <begin position="429"/>
        <end position="451"/>
    </location>
</feature>
<feature type="helix" evidence="50">
    <location>
        <begin position="824"/>
        <end position="837"/>
    </location>
</feature>
<feature type="strand" evidence="50">
    <location>
        <begin position="838"/>
        <end position="843"/>
    </location>
</feature>
<feature type="helix" evidence="50">
    <location>
        <begin position="845"/>
        <end position="852"/>
    </location>
</feature>
<feature type="helix" evidence="50">
    <location>
        <begin position="860"/>
        <end position="869"/>
    </location>
</feature>
<feature type="helix" evidence="50">
    <location>
        <begin position="876"/>
        <end position="880"/>
    </location>
</feature>
<feature type="helix" evidence="49">
    <location>
        <begin position="891"/>
        <end position="904"/>
    </location>
</feature>
<feature type="helix" evidence="49">
    <location>
        <begin position="910"/>
        <end position="916"/>
    </location>
</feature>
<feature type="helix" evidence="49">
    <location>
        <begin position="924"/>
        <end position="933"/>
    </location>
</feature>
<feature type="strand" evidence="49">
    <location>
        <begin position="936"/>
        <end position="939"/>
    </location>
</feature>
<feature type="helix" evidence="49">
    <location>
        <begin position="940"/>
        <end position="943"/>
    </location>
</feature>
<feature type="helix" evidence="46">
    <location>
        <begin position="1008"/>
        <end position="1012"/>
    </location>
</feature>
<feature type="helix" evidence="46">
    <location>
        <begin position="1016"/>
        <end position="1033"/>
    </location>
</feature>
<feature type="strand" evidence="47">
    <location>
        <begin position="1042"/>
        <end position="1044"/>
    </location>
</feature>
<feature type="helix" evidence="46">
    <location>
        <begin position="1049"/>
        <end position="1055"/>
    </location>
</feature>
<feature type="helix" evidence="46">
    <location>
        <begin position="1058"/>
        <end position="1067"/>
    </location>
</feature>
<feature type="turn" evidence="46">
    <location>
        <begin position="1074"/>
        <end position="1076"/>
    </location>
</feature>
<feature type="strand" evidence="47">
    <location>
        <begin position="1078"/>
        <end position="1082"/>
    </location>
</feature>
<feature type="helix" evidence="46">
    <location>
        <begin position="1088"/>
        <end position="1096"/>
    </location>
</feature>